<sequence>MASITDKDHQKVILVGDGAVGSSYAYAMVLQGIAQEIGIVDIFKDKTKGDAIDLSNALPFTSPKKIYSAEYSDAKDADLVVITAGAPQKPGETRLDLVNKNLKILKSIVDPIVDSGFNGIFLVAANPVDILTYATWKLSGFPKNRVVGSGTSLDTARFRQSIAEMVNVDARSVHAYIMGEHGDTEFPVWSHANIGGVTIAEWVKAHPEIKEDKLVKMFEDVRDAAYEIIKLKGATFYGIATALARISKAILNDENAVLPLSVYMDGQYGLNDIYIGTPAVINRNGIQNILEIPLTDHEEESMQKSASQLKKVLTDAFAKNDIETRQ</sequence>
<protein>
    <recommendedName>
        <fullName evidence="1 7">L-lactate dehydrogenase</fullName>
        <shortName evidence="1 7">L-LDH</shortName>
        <ecNumber evidence="1 2 5 10">1.1.1.27</ecNumber>
    </recommendedName>
</protein>
<keyword id="KW-0002">3D-structure</keyword>
<keyword id="KW-0021">Allosteric enzyme</keyword>
<keyword id="KW-0963">Cytoplasm</keyword>
<keyword id="KW-0903">Direct protein sequencing</keyword>
<keyword id="KW-0520">NAD</keyword>
<keyword id="KW-0560">Oxidoreductase</keyword>
<keyword id="KW-0597">Phosphoprotein</keyword>
<organism>
    <name type="scientific">Lacticaseibacillus casei</name>
    <name type="common">Lactobacillus casei</name>
    <dbReference type="NCBI Taxonomy" id="1582"/>
    <lineage>
        <taxon>Bacteria</taxon>
        <taxon>Bacillati</taxon>
        <taxon>Bacillota</taxon>
        <taxon>Bacilli</taxon>
        <taxon>Lactobacillales</taxon>
        <taxon>Lactobacillaceae</taxon>
        <taxon>Lacticaseibacillus</taxon>
    </lineage>
</organism>
<feature type="initiator methionine" description="Removed" evidence="4">
    <location>
        <position position="1"/>
    </location>
</feature>
<feature type="chain" id="PRO_0000168347" description="L-lactate dehydrogenase">
    <location>
        <begin position="2"/>
        <end position="326"/>
    </location>
</feature>
<feature type="active site" description="Proton acceptor" evidence="1 11 12 13 15 16">
    <location>
        <position position="181"/>
    </location>
</feature>
<feature type="binding site" evidence="1">
    <location>
        <position position="20"/>
    </location>
    <ligand>
        <name>NAD(+)</name>
        <dbReference type="ChEBI" id="CHEBI:57540"/>
    </ligand>
</feature>
<feature type="binding site" evidence="1">
    <location>
        <position position="41"/>
    </location>
    <ligand>
        <name>NAD(+)</name>
        <dbReference type="ChEBI" id="CHEBI:57540"/>
    </ligand>
</feature>
<feature type="binding site" evidence="1">
    <location>
        <position position="46"/>
    </location>
    <ligand>
        <name>NAD(+)</name>
        <dbReference type="ChEBI" id="CHEBI:57540"/>
    </ligand>
</feature>
<feature type="binding site" evidence="1">
    <location>
        <position position="71"/>
    </location>
    <ligand>
        <name>NAD(+)</name>
        <dbReference type="ChEBI" id="CHEBI:57540"/>
    </ligand>
</feature>
<feature type="binding site" evidence="1">
    <location>
        <begin position="85"/>
        <end position="86"/>
    </location>
    <ligand>
        <name>NAD(+)</name>
        <dbReference type="ChEBI" id="CHEBI:57540"/>
    </ligand>
</feature>
<feature type="binding site" evidence="1">
    <location>
        <position position="88"/>
    </location>
    <ligand>
        <name>substrate</name>
    </ligand>
</feature>
<feature type="binding site" evidence="1 6 16">
    <location>
        <position position="94"/>
    </location>
    <ligand>
        <name>substrate</name>
    </ligand>
</feature>
<feature type="binding site" evidence="1">
    <location>
        <position position="107"/>
    </location>
    <ligand>
        <name>NAD(+)</name>
        <dbReference type="ChEBI" id="CHEBI:57540"/>
    </ligand>
</feature>
<feature type="binding site" evidence="1">
    <location>
        <begin position="124"/>
        <end position="126"/>
    </location>
    <ligand>
        <name>NAD(+)</name>
        <dbReference type="ChEBI" id="CHEBI:57540"/>
    </ligand>
</feature>
<feature type="binding site" evidence="1 12 16">
    <location>
        <begin position="126"/>
        <end position="129"/>
    </location>
    <ligand>
        <name>substrate</name>
    </ligand>
</feature>
<feature type="binding site" evidence="1">
    <location>
        <position position="149"/>
    </location>
    <ligand>
        <name>NAD(+)</name>
        <dbReference type="ChEBI" id="CHEBI:57540"/>
    </ligand>
</feature>
<feature type="binding site" evidence="1 12 14 15 16">
    <location>
        <begin position="154"/>
        <end position="157"/>
    </location>
    <ligand>
        <name>substrate</name>
    </ligand>
</feature>
<feature type="binding site" evidence="1 6 15 16">
    <location>
        <position position="159"/>
    </location>
    <ligand>
        <name>beta-D-fructose 1,6-bisphosphate</name>
        <dbReference type="ChEBI" id="CHEBI:32966"/>
        <note>allosteric activator</note>
    </ligand>
</feature>
<feature type="binding site" evidence="6 15">
    <location>
        <begin position="171"/>
        <end position="174"/>
    </location>
    <ligand>
        <name>beta-D-fructose 1,6-bisphosphate</name>
        <dbReference type="ChEBI" id="CHEBI:32966"/>
        <note>allosteric activator</note>
    </ligand>
</feature>
<feature type="binding site" evidence="1">
    <location>
        <position position="174"/>
    </location>
    <ligand>
        <name>beta-D-fructose 1,6-bisphosphate</name>
        <dbReference type="ChEBI" id="CHEBI:32966"/>
        <note>allosteric activator</note>
    </ligand>
</feature>
<feature type="binding site" evidence="1 6 14 16">
    <location>
        <position position="235"/>
    </location>
    <ligand>
        <name>substrate</name>
    </ligand>
</feature>
<feature type="modified residue" description="Phosphotyrosine" evidence="1">
    <location>
        <position position="226"/>
    </location>
</feature>
<feature type="mutagenesis site" description="Exhibits no significant catalytic activity toward pyruvate up to 50 mM at pH 5.0 in the absence of fructose 1,6-bisphosphate (FBP). In the presence of 5 mM fructose 1,6-bisphosphate (FBP), it exhibits marked catalytic activity." evidence="3">
    <original>R</original>
    <variation>Q</variation>
    <location>
        <position position="171"/>
    </location>
</feature>
<feature type="mutagenesis site" description="Shows a lower thermoresistance than the wild-type, even in the absence of fructose 1,6-bisphosphate (FBP). Not thermostabilized in the presence of fructose 1,6-bisphosphate (FBP), Mn(2+) or both. Under acidic conditions, the mutant does not show a positive allosteric regulation by fructose 1,6-bisphosphate (FBP), which even inhibits the stimulative effects of the alternative activation factors. In addition, Mn(2+) ions also show greatly reduced inhibitory effects on the mutant enzyme. Under neutral conditions, the reaction of the mutant is slightly enhanced by fructose 1,6-bisphosphate (FBP), but not further stimulates by additional Mn(2+) ions, unlike the case of the wild-type." evidence="5">
    <original>H</original>
    <variation>D</variation>
    <location>
        <position position="174"/>
    </location>
</feature>
<feature type="sequence conflict" description="In Ref. 3; AA sequence." evidence="8" ref="3">
    <original>Y</original>
    <variation>F</variation>
    <location>
        <position position="26"/>
    </location>
</feature>
<feature type="sequence conflict" description="In Ref. 3; AA sequence." evidence="8" ref="3">
    <original>I</original>
    <variation>T</variation>
    <location>
        <position position="52"/>
    </location>
</feature>
<feature type="sequence conflict" description="In Ref. 3; AA sequence." evidence="8" ref="3">
    <original>QK</original>
    <variation>KQ</variation>
    <location>
        <begin position="88"/>
        <end position="89"/>
    </location>
</feature>
<feature type="sequence conflict" description="In Ref. 3; AA sequence." evidence="8" ref="3">
    <original>G</original>
    <variation>L</variation>
    <location>
        <position position="119"/>
    </location>
</feature>
<feature type="sequence conflict" description="In Ref. 3; AA sequence." evidence="8" ref="3">
    <original>L</original>
    <variation>I</variation>
    <location>
        <position position="270"/>
    </location>
</feature>
<feature type="sequence conflict" description="In Ref. 3; AA sequence." evidence="8" ref="3">
    <original>I</original>
    <variation>L</variation>
    <location>
        <position position="273"/>
    </location>
</feature>
<feature type="helix" evidence="19">
    <location>
        <begin position="5"/>
        <end position="7"/>
    </location>
</feature>
<feature type="strand" evidence="19">
    <location>
        <begin position="11"/>
        <end position="15"/>
    </location>
</feature>
<feature type="helix" evidence="19">
    <location>
        <begin position="19"/>
        <end position="31"/>
    </location>
</feature>
<feature type="strand" evidence="19">
    <location>
        <begin position="35"/>
        <end position="40"/>
    </location>
</feature>
<feature type="helix" evidence="19">
    <location>
        <begin position="44"/>
        <end position="55"/>
    </location>
</feature>
<feature type="helix" evidence="19">
    <location>
        <begin position="56"/>
        <end position="60"/>
    </location>
</feature>
<feature type="strand" evidence="19">
    <location>
        <begin position="65"/>
        <end position="68"/>
    </location>
</feature>
<feature type="helix" evidence="19">
    <location>
        <begin position="71"/>
        <end position="76"/>
    </location>
</feature>
<feature type="strand" evidence="19">
    <location>
        <begin position="78"/>
        <end position="82"/>
    </location>
</feature>
<feature type="strand" evidence="17">
    <location>
        <begin position="91"/>
        <end position="93"/>
    </location>
</feature>
<feature type="helix" evidence="19">
    <location>
        <begin position="94"/>
        <end position="114"/>
    </location>
</feature>
<feature type="strand" evidence="19">
    <location>
        <begin position="119"/>
        <end position="123"/>
    </location>
</feature>
<feature type="strand" evidence="19">
    <location>
        <begin position="125"/>
        <end position="127"/>
    </location>
</feature>
<feature type="helix" evidence="19">
    <location>
        <begin position="128"/>
        <end position="139"/>
    </location>
</feature>
<feature type="helix" evidence="19">
    <location>
        <begin position="143"/>
        <end position="145"/>
    </location>
</feature>
<feature type="strand" evidence="19">
    <location>
        <begin position="146"/>
        <end position="148"/>
    </location>
</feature>
<feature type="helix" evidence="19">
    <location>
        <begin position="152"/>
        <end position="166"/>
    </location>
</feature>
<feature type="helix" evidence="19">
    <location>
        <begin position="170"/>
        <end position="172"/>
    </location>
</feature>
<feature type="strand" evidence="19">
    <location>
        <begin position="177"/>
        <end position="182"/>
    </location>
</feature>
<feature type="helix" evidence="19">
    <location>
        <begin position="189"/>
        <end position="191"/>
    </location>
</feature>
<feature type="helix" evidence="19">
    <location>
        <begin position="199"/>
        <end position="205"/>
    </location>
</feature>
<feature type="helix" evidence="19">
    <location>
        <begin position="211"/>
        <end position="222"/>
    </location>
</feature>
<feature type="helix" evidence="19">
    <location>
        <begin position="224"/>
        <end position="232"/>
    </location>
</feature>
<feature type="helix" evidence="19">
    <location>
        <begin position="237"/>
        <end position="251"/>
    </location>
</feature>
<feature type="strand" evidence="19">
    <location>
        <begin position="256"/>
        <end position="266"/>
    </location>
</feature>
<feature type="helix" evidence="19">
    <location>
        <begin position="267"/>
        <end position="269"/>
    </location>
</feature>
<feature type="strand" evidence="19">
    <location>
        <begin position="271"/>
        <end position="282"/>
    </location>
</feature>
<feature type="strand" evidence="19">
    <location>
        <begin position="285"/>
        <end position="289"/>
    </location>
</feature>
<feature type="helix" evidence="19">
    <location>
        <begin position="296"/>
        <end position="316"/>
    </location>
</feature>
<feature type="helix" evidence="18">
    <location>
        <begin position="318"/>
        <end position="323"/>
    </location>
</feature>
<name>LDH_LACCA</name>
<proteinExistence type="evidence at protein level"/>
<reference key="1">
    <citation type="journal article" date="1991" name="Appl. Environ. Microbiol.">
        <title>Cloning and nucleotide sequence of the Lactobacillus casei lactate dehydrogenase gene.</title>
        <authorList>
            <person name="Kim S.F."/>
            <person name="Baek S.J."/>
            <person name="Pack M.Y."/>
        </authorList>
    </citation>
    <scope>NUCLEOTIDE SEQUENCE [GENOMIC DNA]</scope>
    <scope>FUNCTION</scope>
    <source>
        <strain>ATCC 393 / DSM 20011 / JCM 1134 / BCRC 10697 / CCUG 21451 / NBRC 15883 / NCIMB 11970 / NCDO 161 / WDCM 00100</strain>
    </source>
</reference>
<reference key="2">
    <citation type="submission" date="1991-11" db="PIR data bank">
        <authorList>
            <person name="Taguchi H."/>
            <person name="Ohta T."/>
        </authorList>
    </citation>
    <scope>NUCLEOTIDE SEQUENCE [GENOMIC DNA]</scope>
    <source>
        <strain>ATCC 393 / DSM 20011 / JCM 1134 / BCRC 10697 / CCUG 21451 / NBRC 15883 / NCIMB 11970 / NCDO 161 / WDCM 00100</strain>
    </source>
</reference>
<reference key="3">
    <citation type="journal article" date="1983" name="Eur. J. Biochem.">
        <title>The complete primary structure of the allosteric L-lactate dehydrogenase from Lactobacillus casei.</title>
        <authorList>
            <person name="Hensel R."/>
            <person name="Mayr U."/>
            <person name="Yang C."/>
        </authorList>
    </citation>
    <scope>PARTIAL PROTEIN SEQUENCE</scope>
    <source>
        <strain>ATCC 393 / DSM 20011 / JCM 1134 / BCRC 10697 / CCUG 21451 / NBRC 15883 / NCIMB 11970 / NCDO 161 / WDCM 00100</strain>
    </source>
</reference>
<reference key="4">
    <citation type="journal article" date="1977" name="Arch. Microbiol.">
        <title>Comparative studies of lactic acid dehydrogenases in lactic acid bacteria. I. Purification and kinetics of the allosteric L-lactic acid dehydrogenase from Lactobacillus casei ssp. casei and Lactobacillus curvatus.</title>
        <authorList>
            <person name="Hensel R."/>
            <person name="Mayr U."/>
            <person name="Stetter K.O."/>
            <person name="Kandler O."/>
        </authorList>
    </citation>
    <scope>FUNCTION</scope>
    <scope>CATALYTIC ACTIVITY</scope>
    <scope>BIOPHYSICOCHEMICAL PROPERTIES</scope>
    <scope>ACTIVITY REGULATION</scope>
</reference>
<reference key="5">
    <citation type="journal article" date="1995" name="Biosci. Biotechnol. Biochem.">
        <title>Role of histidine 188 in fructose 1,6-bisphosphate- and divalent cation-regulated L-lactate dehydrogenase of Lactobacillus casei.</title>
        <authorList>
            <person name="Taguchi H."/>
            <person name="Ohta T."/>
        </authorList>
    </citation>
    <scope>FUNCTION</scope>
    <scope>CATALYTIC ACTIVITY</scope>
    <scope>MUTAGENESIS OF HIS-174</scope>
    <scope>BIOPHYSICOCHEMICAL PROPERTIES</scope>
    <scope>ACTIVITY REGULATION</scope>
    <source>
        <strain>ATCC 393 / DSM 20011 / JCM 1134 / BCRC 10697 / CCUG 21451 / NBRC 15883 / NCIMB 11970 / NCDO 161 / WDCM 00100</strain>
    </source>
</reference>
<reference key="6">
    <citation type="journal article" date="1984" name="Acta Crystallogr. A">
        <title>Structure determination of the allosteric L-lactate dehydrogenase from Lactobacillus-casei at 3A resolution.</title>
        <authorList>
            <person name="Buehner M."/>
            <person name="Hecht H.J."/>
        </authorList>
    </citation>
    <scope>X-RAY CRYSTALLOGRAPHY (3.00 ANGSTROMS) OF 2-326 IN COMPLEX WITH FRUCTOSE 1,6-BISPHOSPHATE ANALOG</scope>
    <scope>ACTIVE SITE</scope>
</reference>
<reference key="7">
    <citation type="journal article" date="2010" name="Proteins">
        <title>Active and inactive state structures of unliganded Lactobacillus casei allosteric L-lactate dehydrogenase.</title>
        <authorList>
            <person name="Arai K."/>
            <person name="Ishimitsu T."/>
            <person name="Fushinobu S."/>
            <person name="Uchikoba H."/>
            <person name="Matsuzawa H."/>
            <person name="Taguchi H."/>
        </authorList>
    </citation>
    <scope>X-RAY CRYSTALLOGRAPHY (2.50 ANGSTROMS) IN COMPLEX WITH SUBSTRATE ANALOGS</scope>
    <scope>FUNCTION</scope>
    <scope>CATALYTIC ACTIVITY</scope>
    <scope>ACTIVITY REGULATION</scope>
    <scope>MUTAGENESIS OF ARG-171</scope>
    <scope>SUBUNIT</scope>
</reference>
<reference key="8">
    <citation type="submission" date="2012-03" db="PDB data bank">
        <title>Crystal structure of penta mutant of L-lactate dehydrogenase from Lactobacillus casei.</title>
        <authorList>
            <person name="Arai K."/>
            <person name="Miyanaga A."/>
            <person name="Uchikoba H."/>
            <person name="Fushinobu S."/>
            <person name="Taguchi H."/>
        </authorList>
    </citation>
    <scope>X-RAY CRYSTALLOGRAPHY (1.96 ANGSTROMS) IN COMPLEX WITH FRUCTOSE 1,6-BISPHOSPHATE AND SUBSTRATE ANALOGS</scope>
    <scope>ACTIVE SITE</scope>
    <scope>SUBUNIT</scope>
</reference>
<gene>
    <name evidence="1 7" type="primary">ldh</name>
</gene>
<comment type="function">
    <text evidence="1 2 3 5 9">Catalyzes the conversion of lactate to pyruvate.</text>
</comment>
<comment type="catalytic activity">
    <reaction evidence="1 2 5 10">
        <text>(S)-lactate + NAD(+) = pyruvate + NADH + H(+)</text>
        <dbReference type="Rhea" id="RHEA:23444"/>
        <dbReference type="ChEBI" id="CHEBI:15361"/>
        <dbReference type="ChEBI" id="CHEBI:15378"/>
        <dbReference type="ChEBI" id="CHEBI:16651"/>
        <dbReference type="ChEBI" id="CHEBI:57540"/>
        <dbReference type="ChEBI" id="CHEBI:57945"/>
        <dbReference type="EC" id="1.1.1.27"/>
    </reaction>
</comment>
<comment type="activity regulation">
    <text evidence="2 5 10">Allosterically activated by fructose 1,6-bisphosphate (FBP) alone under acidic conditions, while it requires additional activation factors such as divalent cations (Mn(2+)) under neutral conditions (PubMed:14601, PubMed:7766183). Under acidic conditions, Mn(2+) is an inhibitor in the absence of fructose 1,6-bisphosphate (FBP) (PubMed:14601, PubMed:7766183). In case of L.casei, L-LDH binds four fructose 1,6-bisphosphate (FBP) molecules per tetramer, while usual allosteric L-LDH binds only two fructose 1,6-bisphosphate (FBP) molecules per tetramer (PubMed:14601, PubMed:7766183).</text>
</comment>
<comment type="biophysicochemical properties">
    <kinetics>
        <KM evidence="2">0.45 mM for pyruvate (at pH 4.8)</KM>
        <KM evidence="2">0.71 mM for pyruvate (at pH 5.5)</KM>
        <KM evidence="2">3 mM for pyruvate (at pH 6.2)</KM>
        <KM evidence="2">12 mM for pyruvate (at pH 7)</KM>
        <Vmax evidence="2">2500.0 umol/min/mg enzyme with pyruvate as substrate (at pH 6.2)</Vmax>
        <Vmax evidence="2">2400.0 umol/min/mg enzyme with pyruvate as substrate (at pH 7)</Vmax>
        <Vmax evidence="2">2000.0 umol/min/mg enzyme with pyruvate as substrate (at pH 5.5)</Vmax>
        <Vmax evidence="2">1900.0 umol/min/mg enzyme with pyruvate as substrate (at pH 4.8)</Vmax>
    </kinetics>
    <temperatureDependence>
        <text evidence="2 5">Thermostable up to 50 degrees Celsius. Thermostabilized in the presence of both fructose 1,6-bisphosphate (FBP) and Mn(2+) ions.</text>
    </temperatureDependence>
</comment>
<comment type="pathway">
    <text evidence="1">Fermentation; pyruvate fermentation to lactate; (S)-lactate from pyruvate: step 1/1.</text>
</comment>
<comment type="subunit">
    <text evidence="1 3 12">Homotetramer.</text>
</comment>
<comment type="subcellular location">
    <subcellularLocation>
        <location evidence="1">Cytoplasm</location>
    </subcellularLocation>
</comment>
<comment type="similarity">
    <text evidence="1 8">Belongs to the LDH/MDH superfamily. LDH family.</text>
</comment>
<evidence type="ECO:0000255" key="1">
    <source>
        <dbReference type="HAMAP-Rule" id="MF_00488"/>
    </source>
</evidence>
<evidence type="ECO:0000269" key="2">
    <source>
    </source>
</evidence>
<evidence type="ECO:0000269" key="3">
    <source>
    </source>
</evidence>
<evidence type="ECO:0000269" key="4">
    <source>
    </source>
</evidence>
<evidence type="ECO:0000269" key="5">
    <source>
    </source>
</evidence>
<evidence type="ECO:0000269" key="6">
    <source ref="8"/>
</evidence>
<evidence type="ECO:0000303" key="7">
    <source>
    </source>
</evidence>
<evidence type="ECO:0000305" key="8"/>
<evidence type="ECO:0000305" key="9">
    <source>
    </source>
</evidence>
<evidence type="ECO:0000305" key="10">
    <source>
    </source>
</evidence>
<evidence type="ECO:0000305" key="11">
    <source ref="6"/>
</evidence>
<evidence type="ECO:0000305" key="12">
    <source ref="8"/>
</evidence>
<evidence type="ECO:0007744" key="13">
    <source>
        <dbReference type="PDB" id="1LLC"/>
    </source>
</evidence>
<evidence type="ECO:0007744" key="14">
    <source>
        <dbReference type="PDB" id="6J9S"/>
    </source>
</evidence>
<evidence type="ECO:0007744" key="15">
    <source>
        <dbReference type="PDB" id="6J9T"/>
    </source>
</evidence>
<evidence type="ECO:0007744" key="16">
    <source>
        <dbReference type="PDB" id="6J9U"/>
    </source>
</evidence>
<evidence type="ECO:0007829" key="17">
    <source>
        <dbReference type="PDB" id="1LLC"/>
    </source>
</evidence>
<evidence type="ECO:0007829" key="18">
    <source>
        <dbReference type="PDB" id="2ZQY"/>
    </source>
</evidence>
<evidence type="ECO:0007829" key="19">
    <source>
        <dbReference type="PDB" id="6JML"/>
    </source>
</evidence>
<accession>P00343</accession>
<dbReference type="EC" id="1.1.1.27" evidence="1 2 5 10"/>
<dbReference type="EMBL" id="D12591">
    <property type="protein sequence ID" value="BAA02133.1"/>
    <property type="molecule type" value="Genomic_DNA"/>
</dbReference>
<dbReference type="EMBL" id="M76708">
    <property type="protein sequence ID" value="AAA25245.2"/>
    <property type="molecule type" value="Genomic_DNA"/>
</dbReference>
<dbReference type="PIR" id="A43944">
    <property type="entry name" value="DELBLA"/>
</dbReference>
<dbReference type="PDB" id="1LLC">
    <property type="method" value="X-ray"/>
    <property type="resolution" value="3.00 A"/>
    <property type="chains" value="A=2-326"/>
</dbReference>
<dbReference type="PDB" id="2ZQY">
    <property type="method" value="X-ray"/>
    <property type="resolution" value="2.60 A"/>
    <property type="chains" value="A/B/C/D=1-326"/>
</dbReference>
<dbReference type="PDB" id="2ZQZ">
    <property type="method" value="X-ray"/>
    <property type="resolution" value="2.50 A"/>
    <property type="chains" value="A/B/C/D/E/F=1-326"/>
</dbReference>
<dbReference type="PDB" id="6J9S">
    <property type="method" value="X-ray"/>
    <property type="resolution" value="2.00 A"/>
    <property type="chains" value="A/B/C/D/E/F=1-326"/>
</dbReference>
<dbReference type="PDB" id="6J9T">
    <property type="method" value="X-ray"/>
    <property type="resolution" value="2.70 A"/>
    <property type="chains" value="A/B/C/D/E/F=1-326"/>
</dbReference>
<dbReference type="PDB" id="6J9U">
    <property type="method" value="X-ray"/>
    <property type="resolution" value="2.79 A"/>
    <property type="chains" value="A/B/C/D/E/F=1-326"/>
</dbReference>
<dbReference type="PDB" id="6JML">
    <property type="method" value="X-ray"/>
    <property type="resolution" value="2.30 A"/>
    <property type="chains" value="A/B/C/D/E/F=1-326"/>
</dbReference>
<dbReference type="PDBsum" id="1LLC"/>
<dbReference type="PDBsum" id="2ZQY"/>
<dbReference type="PDBsum" id="2ZQZ"/>
<dbReference type="PDBsum" id="6J9S"/>
<dbReference type="PDBsum" id="6J9T"/>
<dbReference type="PDBsum" id="6J9U"/>
<dbReference type="PDBsum" id="6JML"/>
<dbReference type="SMR" id="P00343"/>
<dbReference type="STRING" id="1582.AAW28_10185"/>
<dbReference type="eggNOG" id="COG0039">
    <property type="taxonomic scope" value="Bacteria"/>
</dbReference>
<dbReference type="OMA" id="THLDSMR"/>
<dbReference type="OrthoDB" id="9802969at2"/>
<dbReference type="BioCyc" id="MetaCyc:MONOMER-8681"/>
<dbReference type="SABIO-RK" id="P00343"/>
<dbReference type="UniPathway" id="UPA00554">
    <property type="reaction ID" value="UER00611"/>
</dbReference>
<dbReference type="EvolutionaryTrace" id="P00343"/>
<dbReference type="GO" id="GO:0005737">
    <property type="term" value="C:cytoplasm"/>
    <property type="evidence" value="ECO:0007669"/>
    <property type="project" value="UniProtKB-SubCell"/>
</dbReference>
<dbReference type="GO" id="GO:0004459">
    <property type="term" value="F:L-lactate dehydrogenase activity"/>
    <property type="evidence" value="ECO:0007669"/>
    <property type="project" value="UniProtKB-UniRule"/>
</dbReference>
<dbReference type="GO" id="GO:0006096">
    <property type="term" value="P:glycolytic process"/>
    <property type="evidence" value="ECO:0007669"/>
    <property type="project" value="UniProtKB-UniRule"/>
</dbReference>
<dbReference type="GO" id="GO:0006089">
    <property type="term" value="P:lactate metabolic process"/>
    <property type="evidence" value="ECO:0007669"/>
    <property type="project" value="TreeGrafter"/>
</dbReference>
<dbReference type="CDD" id="cd05291">
    <property type="entry name" value="HicDH_like"/>
    <property type="match status" value="1"/>
</dbReference>
<dbReference type="FunFam" id="3.40.50.720:FF:000018">
    <property type="entry name" value="Malate dehydrogenase"/>
    <property type="match status" value="1"/>
</dbReference>
<dbReference type="Gene3D" id="3.90.110.10">
    <property type="entry name" value="Lactate dehydrogenase/glycoside hydrolase, family 4, C-terminal"/>
    <property type="match status" value="1"/>
</dbReference>
<dbReference type="Gene3D" id="3.40.50.720">
    <property type="entry name" value="NAD(P)-binding Rossmann-like Domain"/>
    <property type="match status" value="1"/>
</dbReference>
<dbReference type="HAMAP" id="MF_00488">
    <property type="entry name" value="Lactate_dehydrog"/>
    <property type="match status" value="1"/>
</dbReference>
<dbReference type="InterPro" id="IPR001557">
    <property type="entry name" value="L-lactate/malate_DH"/>
</dbReference>
<dbReference type="InterPro" id="IPR011304">
    <property type="entry name" value="L-lactate_DH"/>
</dbReference>
<dbReference type="InterPro" id="IPR018177">
    <property type="entry name" value="L-lactate_DH_AS"/>
</dbReference>
<dbReference type="InterPro" id="IPR022383">
    <property type="entry name" value="Lactate/malate_DH_C"/>
</dbReference>
<dbReference type="InterPro" id="IPR001236">
    <property type="entry name" value="Lactate/malate_DH_N"/>
</dbReference>
<dbReference type="InterPro" id="IPR015955">
    <property type="entry name" value="Lactate_DH/Glyco_Ohase_4_C"/>
</dbReference>
<dbReference type="InterPro" id="IPR036291">
    <property type="entry name" value="NAD(P)-bd_dom_sf"/>
</dbReference>
<dbReference type="NCBIfam" id="TIGR01771">
    <property type="entry name" value="L-LDH-NAD"/>
    <property type="match status" value="1"/>
</dbReference>
<dbReference type="NCBIfam" id="NF000824">
    <property type="entry name" value="PRK00066.1"/>
    <property type="match status" value="1"/>
</dbReference>
<dbReference type="NCBIfam" id="NF004863">
    <property type="entry name" value="PRK06223.1"/>
    <property type="match status" value="1"/>
</dbReference>
<dbReference type="PANTHER" id="PTHR43128">
    <property type="entry name" value="L-2-HYDROXYCARBOXYLATE DEHYDROGENASE (NAD(P)(+))"/>
    <property type="match status" value="1"/>
</dbReference>
<dbReference type="PANTHER" id="PTHR43128:SF16">
    <property type="entry name" value="L-LACTATE DEHYDROGENASE"/>
    <property type="match status" value="1"/>
</dbReference>
<dbReference type="Pfam" id="PF02866">
    <property type="entry name" value="Ldh_1_C"/>
    <property type="match status" value="1"/>
</dbReference>
<dbReference type="Pfam" id="PF00056">
    <property type="entry name" value="Ldh_1_N"/>
    <property type="match status" value="1"/>
</dbReference>
<dbReference type="PIRSF" id="PIRSF000102">
    <property type="entry name" value="Lac_mal_DH"/>
    <property type="match status" value="1"/>
</dbReference>
<dbReference type="PRINTS" id="PR00086">
    <property type="entry name" value="LLDHDRGNASE"/>
</dbReference>
<dbReference type="SUPFAM" id="SSF56327">
    <property type="entry name" value="LDH C-terminal domain-like"/>
    <property type="match status" value="1"/>
</dbReference>
<dbReference type="SUPFAM" id="SSF51735">
    <property type="entry name" value="NAD(P)-binding Rossmann-fold domains"/>
    <property type="match status" value="1"/>
</dbReference>
<dbReference type="PROSITE" id="PS00064">
    <property type="entry name" value="L_LDH"/>
    <property type="match status" value="1"/>
</dbReference>